<evidence type="ECO:0000255" key="1">
    <source>
        <dbReference type="HAMAP-Rule" id="MF_00176"/>
    </source>
</evidence>
<gene>
    <name evidence="1" type="primary">serS</name>
    <name type="ordered locus">COSY_0904</name>
</gene>
<comment type="function">
    <text evidence="1">Catalyzes the attachment of serine to tRNA(Ser). Is also able to aminoacylate tRNA(Sec) with serine, to form the misacylated tRNA L-seryl-tRNA(Sec), which will be further converted into selenocysteinyl-tRNA(Sec).</text>
</comment>
<comment type="catalytic activity">
    <reaction evidence="1">
        <text>tRNA(Ser) + L-serine + ATP = L-seryl-tRNA(Ser) + AMP + diphosphate + H(+)</text>
        <dbReference type="Rhea" id="RHEA:12292"/>
        <dbReference type="Rhea" id="RHEA-COMP:9669"/>
        <dbReference type="Rhea" id="RHEA-COMP:9703"/>
        <dbReference type="ChEBI" id="CHEBI:15378"/>
        <dbReference type="ChEBI" id="CHEBI:30616"/>
        <dbReference type="ChEBI" id="CHEBI:33019"/>
        <dbReference type="ChEBI" id="CHEBI:33384"/>
        <dbReference type="ChEBI" id="CHEBI:78442"/>
        <dbReference type="ChEBI" id="CHEBI:78533"/>
        <dbReference type="ChEBI" id="CHEBI:456215"/>
        <dbReference type="EC" id="6.1.1.11"/>
    </reaction>
</comment>
<comment type="catalytic activity">
    <reaction evidence="1">
        <text>tRNA(Sec) + L-serine + ATP = L-seryl-tRNA(Sec) + AMP + diphosphate + H(+)</text>
        <dbReference type="Rhea" id="RHEA:42580"/>
        <dbReference type="Rhea" id="RHEA-COMP:9742"/>
        <dbReference type="Rhea" id="RHEA-COMP:10128"/>
        <dbReference type="ChEBI" id="CHEBI:15378"/>
        <dbReference type="ChEBI" id="CHEBI:30616"/>
        <dbReference type="ChEBI" id="CHEBI:33019"/>
        <dbReference type="ChEBI" id="CHEBI:33384"/>
        <dbReference type="ChEBI" id="CHEBI:78442"/>
        <dbReference type="ChEBI" id="CHEBI:78533"/>
        <dbReference type="ChEBI" id="CHEBI:456215"/>
        <dbReference type="EC" id="6.1.1.11"/>
    </reaction>
</comment>
<comment type="pathway">
    <text evidence="1">Aminoacyl-tRNA biosynthesis; selenocysteinyl-tRNA(Sec) biosynthesis; L-seryl-tRNA(Sec) from L-serine and tRNA(Sec): step 1/1.</text>
</comment>
<comment type="subunit">
    <text evidence="1">Homodimer. The tRNA molecule binds across the dimer.</text>
</comment>
<comment type="subcellular location">
    <subcellularLocation>
        <location evidence="1">Cytoplasm</location>
    </subcellularLocation>
</comment>
<comment type="domain">
    <text evidence="1">Consists of two distinct domains, a catalytic core and a N-terminal extension that is involved in tRNA binding.</text>
</comment>
<comment type="similarity">
    <text evidence="1">Belongs to the class-II aminoacyl-tRNA synthetase family. Type-1 seryl-tRNA synthetase subfamily.</text>
</comment>
<sequence>MLSKKQLRLDMKAVANALKKRYFYFDVDHLIELESNRKKNQIETQNLQNLRNMQSKAIGKAKASGEDIKSLLKNVSDLSTKLNLAKSNLQLIQSEIDVIVLSMPNIPHHSVPNGKSEEDNIEVSKWGKLVNYDFDVKDHVDLGAMYGLDFETAVKISGARFSVMTGKIARLHRALTQFMLDRHSEVNGYTEAYVPYLVNTESLIGTGQLPKFEADLFKTYLHGEKGETKTLYLIPTGEVPVTNMMRDMIIKENDLPLKFVTHTPSFRSEAGSYGRYTRGLIRQHQFEKVELVQVVKAQDSYQALEVLTTHAEDILQALELPYRKISLCAGDLGFSATKTYDLEVWLPGQNVYCEISSCSCFEDFQARRLQLRYKNKETNKLELLHTLNGSGLAVGRTLVAVLENHQQADRSIKIPFVLQSYMGGLEVMN</sequence>
<organism>
    <name type="scientific">Vesicomyosocius okutanii subsp. Calyptogena okutanii (strain HA)</name>
    <dbReference type="NCBI Taxonomy" id="412965"/>
    <lineage>
        <taxon>Bacteria</taxon>
        <taxon>Pseudomonadati</taxon>
        <taxon>Pseudomonadota</taxon>
        <taxon>Gammaproteobacteria</taxon>
        <taxon>Candidatus Pseudothioglobaceae</taxon>
        <taxon>Candidatus Vesicomyosocius</taxon>
    </lineage>
</organism>
<accession>A5CVL9</accession>
<proteinExistence type="inferred from homology"/>
<name>SYS_VESOH</name>
<keyword id="KW-0030">Aminoacyl-tRNA synthetase</keyword>
<keyword id="KW-0067">ATP-binding</keyword>
<keyword id="KW-0963">Cytoplasm</keyword>
<keyword id="KW-0436">Ligase</keyword>
<keyword id="KW-0547">Nucleotide-binding</keyword>
<keyword id="KW-0648">Protein biosynthesis</keyword>
<keyword id="KW-1185">Reference proteome</keyword>
<dbReference type="EC" id="6.1.1.11" evidence="1"/>
<dbReference type="EMBL" id="AP009247">
    <property type="protein sequence ID" value="BAF62008.1"/>
    <property type="molecule type" value="Genomic_DNA"/>
</dbReference>
<dbReference type="RefSeq" id="WP_011930277.1">
    <property type="nucleotide sequence ID" value="NC_009465.1"/>
</dbReference>
<dbReference type="SMR" id="A5CVL9"/>
<dbReference type="STRING" id="412965.COSY_0904"/>
<dbReference type="KEGG" id="vok:COSY_0904"/>
<dbReference type="eggNOG" id="COG0172">
    <property type="taxonomic scope" value="Bacteria"/>
</dbReference>
<dbReference type="HOGENOM" id="CLU_023797_1_1_6"/>
<dbReference type="OrthoDB" id="9804647at2"/>
<dbReference type="UniPathway" id="UPA00906">
    <property type="reaction ID" value="UER00895"/>
</dbReference>
<dbReference type="Proteomes" id="UP000000247">
    <property type="component" value="Chromosome"/>
</dbReference>
<dbReference type="GO" id="GO:0005737">
    <property type="term" value="C:cytoplasm"/>
    <property type="evidence" value="ECO:0007669"/>
    <property type="project" value="UniProtKB-SubCell"/>
</dbReference>
<dbReference type="GO" id="GO:0005524">
    <property type="term" value="F:ATP binding"/>
    <property type="evidence" value="ECO:0007669"/>
    <property type="project" value="UniProtKB-UniRule"/>
</dbReference>
<dbReference type="GO" id="GO:0004828">
    <property type="term" value="F:serine-tRNA ligase activity"/>
    <property type="evidence" value="ECO:0007669"/>
    <property type="project" value="UniProtKB-UniRule"/>
</dbReference>
<dbReference type="GO" id="GO:0016260">
    <property type="term" value="P:selenocysteine biosynthetic process"/>
    <property type="evidence" value="ECO:0007669"/>
    <property type="project" value="UniProtKB-UniRule"/>
</dbReference>
<dbReference type="GO" id="GO:0006434">
    <property type="term" value="P:seryl-tRNA aminoacylation"/>
    <property type="evidence" value="ECO:0007669"/>
    <property type="project" value="UniProtKB-UniRule"/>
</dbReference>
<dbReference type="CDD" id="cd00770">
    <property type="entry name" value="SerRS_core"/>
    <property type="match status" value="1"/>
</dbReference>
<dbReference type="Gene3D" id="3.30.930.10">
    <property type="entry name" value="Bira Bifunctional Protein, Domain 2"/>
    <property type="match status" value="1"/>
</dbReference>
<dbReference type="Gene3D" id="1.10.287.40">
    <property type="entry name" value="Serine-tRNA synthetase, tRNA binding domain"/>
    <property type="match status" value="1"/>
</dbReference>
<dbReference type="HAMAP" id="MF_00176">
    <property type="entry name" value="Ser_tRNA_synth_type1"/>
    <property type="match status" value="1"/>
</dbReference>
<dbReference type="InterPro" id="IPR002314">
    <property type="entry name" value="aa-tRNA-synt_IIb"/>
</dbReference>
<dbReference type="InterPro" id="IPR006195">
    <property type="entry name" value="aa-tRNA-synth_II"/>
</dbReference>
<dbReference type="InterPro" id="IPR045864">
    <property type="entry name" value="aa-tRNA-synth_II/BPL/LPL"/>
</dbReference>
<dbReference type="InterPro" id="IPR002317">
    <property type="entry name" value="Ser-tRNA-ligase_type_1"/>
</dbReference>
<dbReference type="InterPro" id="IPR015866">
    <property type="entry name" value="Ser-tRNA-synth_1_N"/>
</dbReference>
<dbReference type="InterPro" id="IPR042103">
    <property type="entry name" value="SerRS_1_N_sf"/>
</dbReference>
<dbReference type="InterPro" id="IPR033729">
    <property type="entry name" value="SerRS_core"/>
</dbReference>
<dbReference type="InterPro" id="IPR010978">
    <property type="entry name" value="tRNA-bd_arm"/>
</dbReference>
<dbReference type="NCBIfam" id="TIGR00414">
    <property type="entry name" value="serS"/>
    <property type="match status" value="1"/>
</dbReference>
<dbReference type="PANTHER" id="PTHR43697:SF1">
    <property type="entry name" value="SERINE--TRNA LIGASE"/>
    <property type="match status" value="1"/>
</dbReference>
<dbReference type="PANTHER" id="PTHR43697">
    <property type="entry name" value="SERYL-TRNA SYNTHETASE"/>
    <property type="match status" value="1"/>
</dbReference>
<dbReference type="Pfam" id="PF02403">
    <property type="entry name" value="Seryl_tRNA_N"/>
    <property type="match status" value="1"/>
</dbReference>
<dbReference type="Pfam" id="PF00587">
    <property type="entry name" value="tRNA-synt_2b"/>
    <property type="match status" value="1"/>
</dbReference>
<dbReference type="PIRSF" id="PIRSF001529">
    <property type="entry name" value="Ser-tRNA-synth_IIa"/>
    <property type="match status" value="1"/>
</dbReference>
<dbReference type="PRINTS" id="PR00981">
    <property type="entry name" value="TRNASYNTHSER"/>
</dbReference>
<dbReference type="SUPFAM" id="SSF55681">
    <property type="entry name" value="Class II aaRS and biotin synthetases"/>
    <property type="match status" value="1"/>
</dbReference>
<dbReference type="SUPFAM" id="SSF46589">
    <property type="entry name" value="tRNA-binding arm"/>
    <property type="match status" value="1"/>
</dbReference>
<dbReference type="PROSITE" id="PS50862">
    <property type="entry name" value="AA_TRNA_LIGASE_II"/>
    <property type="match status" value="1"/>
</dbReference>
<reference key="1">
    <citation type="journal article" date="2007" name="Curr. Biol.">
        <title>Reduced genome of the thioautotrophic intracellular symbiont in a deep-sea clam, Calyptogena okutanii.</title>
        <authorList>
            <person name="Kuwahara H."/>
            <person name="Yoshida T."/>
            <person name="Takaki Y."/>
            <person name="Shimamura S."/>
            <person name="Nishi S."/>
            <person name="Harada M."/>
            <person name="Matsuyama K."/>
            <person name="Takishita K."/>
            <person name="Kawato M."/>
            <person name="Uematsu K."/>
            <person name="Fujiwara Y."/>
            <person name="Sato T."/>
            <person name="Kato C."/>
            <person name="Kitagawa M."/>
            <person name="Kato I."/>
            <person name="Maruyama T."/>
        </authorList>
    </citation>
    <scope>NUCLEOTIDE SEQUENCE [LARGE SCALE GENOMIC DNA]</scope>
    <source>
        <strain>HA</strain>
    </source>
</reference>
<feature type="chain" id="PRO_1000019864" description="Serine--tRNA ligase">
    <location>
        <begin position="1"/>
        <end position="429"/>
    </location>
</feature>
<feature type="binding site" evidence="1">
    <location>
        <begin position="236"/>
        <end position="238"/>
    </location>
    <ligand>
        <name>L-serine</name>
        <dbReference type="ChEBI" id="CHEBI:33384"/>
    </ligand>
</feature>
<feature type="binding site" evidence="1">
    <location>
        <begin position="267"/>
        <end position="269"/>
    </location>
    <ligand>
        <name>ATP</name>
        <dbReference type="ChEBI" id="CHEBI:30616"/>
    </ligand>
</feature>
<feature type="binding site" evidence="1">
    <location>
        <position position="290"/>
    </location>
    <ligand>
        <name>L-serine</name>
        <dbReference type="ChEBI" id="CHEBI:33384"/>
    </ligand>
</feature>
<feature type="binding site" evidence="1">
    <location>
        <begin position="354"/>
        <end position="357"/>
    </location>
    <ligand>
        <name>ATP</name>
        <dbReference type="ChEBI" id="CHEBI:30616"/>
    </ligand>
</feature>
<feature type="binding site" evidence="1">
    <location>
        <position position="390"/>
    </location>
    <ligand>
        <name>L-serine</name>
        <dbReference type="ChEBI" id="CHEBI:33384"/>
    </ligand>
</feature>
<protein>
    <recommendedName>
        <fullName evidence="1">Serine--tRNA ligase</fullName>
        <ecNumber evidence="1">6.1.1.11</ecNumber>
    </recommendedName>
    <alternativeName>
        <fullName evidence="1">Seryl-tRNA synthetase</fullName>
        <shortName evidence="1">SerRS</shortName>
    </alternativeName>
    <alternativeName>
        <fullName evidence="1">Seryl-tRNA(Ser/Sec) synthetase</fullName>
    </alternativeName>
</protein>